<comment type="function">
    <text>Ferredoxins are iron-sulfur proteins that transfer electrons in a wide variety of metabolic reactions.</text>
</comment>
<comment type="cofactor">
    <cofactor>
        <name>[2Fe-2S] cluster</name>
        <dbReference type="ChEBI" id="CHEBI:190135"/>
    </cofactor>
    <text>Binds 1 [2Fe-2S] cluster.</text>
</comment>
<comment type="subcellular location">
    <subcellularLocation>
        <location>Plastid</location>
        <location>Chloroplast</location>
    </subcellularLocation>
</comment>
<comment type="similarity">
    <text evidence="2">Belongs to the 2Fe2S plant-type ferredoxin family.</text>
</comment>
<name>FER2_SPIOL</name>
<accession>P00224</accession>
<reference key="1">
    <citation type="journal article" date="1983" name="Plant Cell Physiol.">
        <title>Ferredoxins in developing spinach cotyledons: the presence of two molecular species.</title>
        <authorList>
            <person name="Takahashi Y."/>
            <person name="Hase T."/>
            <person name="Wada K."/>
            <person name="Matsubara H."/>
        </authorList>
    </citation>
    <scope>PROTEIN SEQUENCE</scope>
    <source>
        <strain>cv. Munstarlander</strain>
    </source>
</reference>
<proteinExistence type="evidence at protein level"/>
<feature type="chain" id="PRO_0000189370" description="Ferredoxin-2">
    <location>
        <begin position="1"/>
        <end position="97"/>
    </location>
</feature>
<feature type="domain" description="2Fe-2S ferredoxin-type" evidence="1">
    <location>
        <begin position="3"/>
        <end position="93"/>
    </location>
</feature>
<feature type="binding site">
    <location>
        <position position="39"/>
    </location>
    <ligand>
        <name>[2Fe-2S] cluster</name>
        <dbReference type="ChEBI" id="CHEBI:190135"/>
    </ligand>
</feature>
<feature type="binding site">
    <location>
        <position position="44"/>
    </location>
    <ligand>
        <name>[2Fe-2S] cluster</name>
        <dbReference type="ChEBI" id="CHEBI:190135"/>
    </ligand>
</feature>
<feature type="binding site">
    <location>
        <position position="47"/>
    </location>
    <ligand>
        <name>[2Fe-2S] cluster</name>
        <dbReference type="ChEBI" id="CHEBI:190135"/>
    </ligand>
</feature>
<feature type="binding site">
    <location>
        <position position="77"/>
    </location>
    <ligand>
        <name>[2Fe-2S] cluster</name>
        <dbReference type="ChEBI" id="CHEBI:190135"/>
    </ligand>
</feature>
<organism>
    <name type="scientific">Spinacia oleracea</name>
    <name type="common">Spinach</name>
    <dbReference type="NCBI Taxonomy" id="3562"/>
    <lineage>
        <taxon>Eukaryota</taxon>
        <taxon>Viridiplantae</taxon>
        <taxon>Streptophyta</taxon>
        <taxon>Embryophyta</taxon>
        <taxon>Tracheophyta</taxon>
        <taxon>Spermatophyta</taxon>
        <taxon>Magnoliopsida</taxon>
        <taxon>eudicotyledons</taxon>
        <taxon>Gunneridae</taxon>
        <taxon>Pentapetalae</taxon>
        <taxon>Caryophyllales</taxon>
        <taxon>Chenopodiaceae</taxon>
        <taxon>Chenopodioideae</taxon>
        <taxon>Anserineae</taxon>
        <taxon>Spinacia</taxon>
    </lineage>
</organism>
<dbReference type="PIR" id="A00231">
    <property type="entry name" value="FESP2"/>
</dbReference>
<dbReference type="SMR" id="P00224"/>
<dbReference type="Proteomes" id="UP001155700">
    <property type="component" value="Unplaced"/>
</dbReference>
<dbReference type="GO" id="GO:0009570">
    <property type="term" value="C:chloroplast stroma"/>
    <property type="evidence" value="ECO:0000318"/>
    <property type="project" value="GO_Central"/>
</dbReference>
<dbReference type="GO" id="GO:0051537">
    <property type="term" value="F:2 iron, 2 sulfur cluster binding"/>
    <property type="evidence" value="ECO:0007669"/>
    <property type="project" value="UniProtKB-KW"/>
</dbReference>
<dbReference type="GO" id="GO:0009055">
    <property type="term" value="F:electron transfer activity"/>
    <property type="evidence" value="ECO:0007669"/>
    <property type="project" value="InterPro"/>
</dbReference>
<dbReference type="GO" id="GO:0046872">
    <property type="term" value="F:metal ion binding"/>
    <property type="evidence" value="ECO:0007669"/>
    <property type="project" value="UniProtKB-KW"/>
</dbReference>
<dbReference type="GO" id="GO:0022900">
    <property type="term" value="P:electron transport chain"/>
    <property type="evidence" value="ECO:0007669"/>
    <property type="project" value="InterPro"/>
</dbReference>
<dbReference type="CDD" id="cd00207">
    <property type="entry name" value="fer2"/>
    <property type="match status" value="1"/>
</dbReference>
<dbReference type="FunFam" id="3.10.20.30:FF:000014">
    <property type="entry name" value="Ferredoxin"/>
    <property type="match status" value="1"/>
</dbReference>
<dbReference type="Gene3D" id="3.10.20.30">
    <property type="match status" value="1"/>
</dbReference>
<dbReference type="InterPro" id="IPR036010">
    <property type="entry name" value="2Fe-2S_ferredoxin-like_sf"/>
</dbReference>
<dbReference type="InterPro" id="IPR001041">
    <property type="entry name" value="2Fe-2S_ferredoxin-type"/>
</dbReference>
<dbReference type="InterPro" id="IPR006058">
    <property type="entry name" value="2Fe2S_fd_BS"/>
</dbReference>
<dbReference type="InterPro" id="IPR012675">
    <property type="entry name" value="Beta-grasp_dom_sf"/>
</dbReference>
<dbReference type="InterPro" id="IPR010241">
    <property type="entry name" value="Fd_pln"/>
</dbReference>
<dbReference type="NCBIfam" id="TIGR02008">
    <property type="entry name" value="fdx_plant"/>
    <property type="match status" value="1"/>
</dbReference>
<dbReference type="PANTHER" id="PTHR43112">
    <property type="entry name" value="FERREDOXIN"/>
    <property type="match status" value="1"/>
</dbReference>
<dbReference type="PANTHER" id="PTHR43112:SF3">
    <property type="entry name" value="FERREDOXIN-2, CHLOROPLASTIC"/>
    <property type="match status" value="1"/>
</dbReference>
<dbReference type="Pfam" id="PF00111">
    <property type="entry name" value="Fer2"/>
    <property type="match status" value="1"/>
</dbReference>
<dbReference type="SUPFAM" id="SSF54292">
    <property type="entry name" value="2Fe-2S ferredoxin-like"/>
    <property type="match status" value="1"/>
</dbReference>
<dbReference type="PROSITE" id="PS00197">
    <property type="entry name" value="2FE2S_FER_1"/>
    <property type="match status" value="1"/>
</dbReference>
<dbReference type="PROSITE" id="PS51085">
    <property type="entry name" value="2FE2S_FER_2"/>
    <property type="match status" value="1"/>
</dbReference>
<evidence type="ECO:0000255" key="1">
    <source>
        <dbReference type="PROSITE-ProRule" id="PRU00465"/>
    </source>
</evidence>
<evidence type="ECO:0000305" key="2"/>
<protein>
    <recommendedName>
        <fullName>Ferredoxin-2</fullName>
    </recommendedName>
    <alternativeName>
        <fullName>Ferredoxin II</fullName>
    </alternativeName>
</protein>
<sequence length="97" mass="10334">ATYKVTLVTPSGSQVIECGDDEYILDAAEEKGMDLPYSCRAGACSSCAGKVTSGSVDQSDQSFLEDGQMEEGWVLTCIAYPTGDVTIETHKEEELTA</sequence>
<keyword id="KW-0001">2Fe-2S</keyword>
<keyword id="KW-0150">Chloroplast</keyword>
<keyword id="KW-0903">Direct protein sequencing</keyword>
<keyword id="KW-0249">Electron transport</keyword>
<keyword id="KW-0408">Iron</keyword>
<keyword id="KW-0411">Iron-sulfur</keyword>
<keyword id="KW-0479">Metal-binding</keyword>
<keyword id="KW-0934">Plastid</keyword>
<keyword id="KW-1185">Reference proteome</keyword>
<keyword id="KW-0813">Transport</keyword>